<accession>Q6IQT4</accession>
<keyword id="KW-0963">Cytoplasm</keyword>
<keyword id="KW-0539">Nucleus</keyword>
<keyword id="KW-1185">Reference proteome</keyword>
<keyword id="KW-0736">Signalosome</keyword>
<protein>
    <recommendedName>
        <fullName>COP9 signalosome complex subunit 2</fullName>
        <shortName>Signalosome subunit 2</shortName>
    </recommendedName>
</protein>
<name>CSN2_DANRE</name>
<gene>
    <name type="primary">cops2</name>
    <name type="synonym">csn2</name>
    <name type="ORF">zgc:86624</name>
</gene>
<proteinExistence type="evidence at transcript level"/>
<comment type="function">
    <text evidence="1">Essential component of the COP9 signalosome complex (CSN), a complex involved in various cellular and developmental processes. The CSN complex is an essential regulator of the ubiquitin (Ubl) conjugation pathway by mediating the deneddylation of the cullin subunits of E3 ligase complexes, leading to modify the Ubl ligase activity.</text>
</comment>
<comment type="subunit">
    <text evidence="1">Component of the CSN complex, probably composed of cops1, cops2, cops3, cops4, cops5, cops6, cops7, cops8 and cops9.</text>
</comment>
<comment type="subcellular location">
    <subcellularLocation>
        <location evidence="1">Cytoplasm</location>
    </subcellularLocation>
    <subcellularLocation>
        <location evidence="1">Nucleus</location>
    </subcellularLocation>
</comment>
<comment type="similarity">
    <text evidence="3">Belongs to the CSN2 family.</text>
</comment>
<feature type="chain" id="PRO_0000120971" description="COP9 signalosome complex subunit 2">
    <location>
        <begin position="1"/>
        <end position="443"/>
    </location>
</feature>
<feature type="domain" description="PCI" evidence="2">
    <location>
        <begin position="254"/>
        <end position="416"/>
    </location>
</feature>
<organism>
    <name type="scientific">Danio rerio</name>
    <name type="common">Zebrafish</name>
    <name type="synonym">Brachydanio rerio</name>
    <dbReference type="NCBI Taxonomy" id="7955"/>
    <lineage>
        <taxon>Eukaryota</taxon>
        <taxon>Metazoa</taxon>
        <taxon>Chordata</taxon>
        <taxon>Craniata</taxon>
        <taxon>Vertebrata</taxon>
        <taxon>Euteleostomi</taxon>
        <taxon>Actinopterygii</taxon>
        <taxon>Neopterygii</taxon>
        <taxon>Teleostei</taxon>
        <taxon>Ostariophysi</taxon>
        <taxon>Cypriniformes</taxon>
        <taxon>Danionidae</taxon>
        <taxon>Danioninae</taxon>
        <taxon>Danio</taxon>
    </lineage>
</organism>
<sequence>MSDMEDDFMCDDEEDYDLEYSEDSNSEPNVDLENQYYNSKALKEDDPKAALSSFQKVLELEGEKGEWGFKALKQMIKINFKLTNFPEMMNRYKQLLTYIRSAVTRNYSEKSINSILDYISTSKQMDLLQEFYETTLEALKDAKNDRLWFKTNTKLGKLYLEREEFGKLQKILRQLHQSCQTDDGEDDLKKGTQLLEIYALEIQMYTAQKNNKKLKALYEQSLHIKSAIPHPLIMGVIRECGGKMHLREGEFEKAHTDFFEAFKNYDESGSPRRTTCLKYLVLANMLMKSGINPFDSQEAKPYKNDPEILAMTNLVSAYQNNDITEFEKILKTNHSNIMDDPFIREHIEELLRNIRTQVLIKLIKPYTRIHIPFISKELNIDVADVESLLVQCILDNTINGRIDQVNQLLELDHQKRGGARYTALDKWTNQLNSLNQAIVSKLA</sequence>
<dbReference type="EMBL" id="BC071320">
    <property type="protein sequence ID" value="AAH71320.1"/>
    <property type="molecule type" value="mRNA"/>
</dbReference>
<dbReference type="RefSeq" id="NP_001002055.1">
    <property type="nucleotide sequence ID" value="NM_001002055.1"/>
</dbReference>
<dbReference type="SMR" id="Q6IQT4"/>
<dbReference type="FunCoup" id="Q6IQT4">
    <property type="interactions" value="3118"/>
</dbReference>
<dbReference type="STRING" id="7955.ENSDARP00000012359"/>
<dbReference type="PaxDb" id="7955-ENSDARP00000012359"/>
<dbReference type="Ensembl" id="ENSDART00000006124">
    <property type="protein sequence ID" value="ENSDARP00000012359"/>
    <property type="gene ID" value="ENSDARG00000004785"/>
</dbReference>
<dbReference type="GeneID" id="415145"/>
<dbReference type="KEGG" id="dre:415145"/>
<dbReference type="AGR" id="ZFIN:ZDB-GENE-040625-15"/>
<dbReference type="CTD" id="9318"/>
<dbReference type="ZFIN" id="ZDB-GENE-040625-15">
    <property type="gene designation" value="cops2"/>
</dbReference>
<dbReference type="eggNOG" id="KOG1464">
    <property type="taxonomic scope" value="Eukaryota"/>
</dbReference>
<dbReference type="HOGENOM" id="CLU_028981_0_0_1"/>
<dbReference type="InParanoid" id="Q6IQT4"/>
<dbReference type="OMA" id="SEENWKD"/>
<dbReference type="OrthoDB" id="194139at2759"/>
<dbReference type="PhylomeDB" id="Q6IQT4"/>
<dbReference type="TreeFam" id="TF105738"/>
<dbReference type="Reactome" id="R-DRE-8856825">
    <property type="pathway name" value="Cargo recognition for clathrin-mediated endocytosis"/>
</dbReference>
<dbReference type="Reactome" id="R-DRE-8951664">
    <property type="pathway name" value="Neddylation"/>
</dbReference>
<dbReference type="PRO" id="PR:Q6IQT4"/>
<dbReference type="Proteomes" id="UP000000437">
    <property type="component" value="Chromosome 25"/>
</dbReference>
<dbReference type="Bgee" id="ENSDARG00000004785">
    <property type="expression patterns" value="Expressed in testis and 29 other cell types or tissues"/>
</dbReference>
<dbReference type="ExpressionAtlas" id="Q6IQT4">
    <property type="expression patterns" value="baseline and differential"/>
</dbReference>
<dbReference type="GO" id="GO:0008180">
    <property type="term" value="C:COP9 signalosome"/>
    <property type="evidence" value="ECO:0000318"/>
    <property type="project" value="GO_Central"/>
</dbReference>
<dbReference type="GO" id="GO:0005737">
    <property type="term" value="C:cytoplasm"/>
    <property type="evidence" value="ECO:0007669"/>
    <property type="project" value="UniProtKB-SubCell"/>
</dbReference>
<dbReference type="GO" id="GO:0005634">
    <property type="term" value="C:nucleus"/>
    <property type="evidence" value="ECO:0000250"/>
    <property type="project" value="UniProtKB"/>
</dbReference>
<dbReference type="GO" id="GO:0000122">
    <property type="term" value="P:negative regulation of transcription by RNA polymerase II"/>
    <property type="evidence" value="ECO:0000250"/>
    <property type="project" value="UniProtKB"/>
</dbReference>
<dbReference type="GO" id="GO:0000338">
    <property type="term" value="P:protein deneddylation"/>
    <property type="evidence" value="ECO:0000318"/>
    <property type="project" value="GO_Central"/>
</dbReference>
<dbReference type="FunFam" id="1.25.40.570:FF:000001">
    <property type="entry name" value="Putative cop9 signalosome complex subunit 2"/>
    <property type="match status" value="1"/>
</dbReference>
<dbReference type="Gene3D" id="1.25.40.570">
    <property type="match status" value="1"/>
</dbReference>
<dbReference type="InterPro" id="IPR050871">
    <property type="entry name" value="26S_Proteasome/COP9_Components"/>
</dbReference>
<dbReference type="InterPro" id="IPR000717">
    <property type="entry name" value="PCI_dom"/>
</dbReference>
<dbReference type="InterPro" id="IPR011990">
    <property type="entry name" value="TPR-like_helical_dom_sf"/>
</dbReference>
<dbReference type="InterPro" id="IPR036390">
    <property type="entry name" value="WH_DNA-bd_sf"/>
</dbReference>
<dbReference type="PANTHER" id="PTHR10678">
    <property type="entry name" value="26S PROTEASOME NON-ATPASE REGULATORY SUBUNIT 11/COP9 SIGNALOSOME COMPLEX SUBUNIT 2"/>
    <property type="match status" value="1"/>
</dbReference>
<dbReference type="Pfam" id="PF01399">
    <property type="entry name" value="PCI"/>
    <property type="match status" value="1"/>
</dbReference>
<dbReference type="SMART" id="SM00753">
    <property type="entry name" value="PAM"/>
    <property type="match status" value="1"/>
</dbReference>
<dbReference type="SMART" id="SM00088">
    <property type="entry name" value="PINT"/>
    <property type="match status" value="1"/>
</dbReference>
<dbReference type="SUPFAM" id="SSF48452">
    <property type="entry name" value="TPR-like"/>
    <property type="match status" value="1"/>
</dbReference>
<dbReference type="SUPFAM" id="SSF46785">
    <property type="entry name" value="Winged helix' DNA-binding domain"/>
    <property type="match status" value="1"/>
</dbReference>
<dbReference type="PROSITE" id="PS50250">
    <property type="entry name" value="PCI"/>
    <property type="match status" value="1"/>
</dbReference>
<reference key="1">
    <citation type="submission" date="2004-06" db="EMBL/GenBank/DDBJ databases">
        <authorList>
            <consortium name="NIH - Zebrafish Gene Collection (ZGC) project"/>
        </authorList>
    </citation>
    <scope>NUCLEOTIDE SEQUENCE [LARGE SCALE MRNA]</scope>
    <source>
        <tissue>Embryo</tissue>
    </source>
</reference>
<evidence type="ECO:0000250" key="1">
    <source>
        <dbReference type="UniProtKB" id="P61201"/>
    </source>
</evidence>
<evidence type="ECO:0000255" key="2">
    <source>
        <dbReference type="PROSITE-ProRule" id="PRU01185"/>
    </source>
</evidence>
<evidence type="ECO:0000305" key="3"/>